<comment type="function">
    <text evidence="1">Site-specific tyrosine recombinase, which acts by catalyzing the cutting and rejoining of the recombining DNA molecules. The XerC-XerD complex is essential to convert dimers of the bacterial chromosome into monomers to permit their segregation at cell division. It also contributes to the segregational stability of plasmids.</text>
</comment>
<comment type="subunit">
    <text evidence="1">Forms a cyclic heterotetrameric complex composed of two molecules of XerC and two molecules of XerD.</text>
</comment>
<comment type="subcellular location">
    <subcellularLocation>
        <location evidence="1">Cytoplasm</location>
    </subcellularLocation>
</comment>
<comment type="similarity">
    <text evidence="1">Belongs to the 'phage' integrase family. XerC subfamily.</text>
</comment>
<gene>
    <name evidence="1" type="primary">xerC</name>
    <name type="ordered locus">THEYE_A1395</name>
</gene>
<evidence type="ECO:0000255" key="1">
    <source>
        <dbReference type="HAMAP-Rule" id="MF_01808"/>
    </source>
</evidence>
<evidence type="ECO:0000255" key="2">
    <source>
        <dbReference type="PROSITE-ProRule" id="PRU01246"/>
    </source>
</evidence>
<evidence type="ECO:0000255" key="3">
    <source>
        <dbReference type="PROSITE-ProRule" id="PRU01248"/>
    </source>
</evidence>
<reference key="1">
    <citation type="submission" date="2008-08" db="EMBL/GenBank/DDBJ databases">
        <title>The complete genome sequence of Thermodesulfovibrio yellowstonii strain ATCC 51303 / DSM 11347 / YP87.</title>
        <authorList>
            <person name="Dodson R.J."/>
            <person name="Durkin A.S."/>
            <person name="Wu M."/>
            <person name="Eisen J."/>
            <person name="Sutton G."/>
        </authorList>
    </citation>
    <scope>NUCLEOTIDE SEQUENCE [LARGE SCALE GENOMIC DNA]</scope>
    <source>
        <strain>ATCC 51303 / DSM 11347 / YP87</strain>
    </source>
</reference>
<protein>
    <recommendedName>
        <fullName evidence="1">Tyrosine recombinase XerC</fullName>
    </recommendedName>
</protein>
<keyword id="KW-0131">Cell cycle</keyword>
<keyword id="KW-0132">Cell division</keyword>
<keyword id="KW-0159">Chromosome partition</keyword>
<keyword id="KW-0963">Cytoplasm</keyword>
<keyword id="KW-0229">DNA integration</keyword>
<keyword id="KW-0233">DNA recombination</keyword>
<keyword id="KW-0238">DNA-binding</keyword>
<keyword id="KW-1185">Reference proteome</keyword>
<dbReference type="EMBL" id="CP001147">
    <property type="protein sequence ID" value="ACI20348.1"/>
    <property type="molecule type" value="Genomic_DNA"/>
</dbReference>
<dbReference type="RefSeq" id="WP_012545085.1">
    <property type="nucleotide sequence ID" value="NC_011296.1"/>
</dbReference>
<dbReference type="RefSeq" id="YP_002249196.1">
    <property type="nucleotide sequence ID" value="NC_011296.1"/>
</dbReference>
<dbReference type="SMR" id="B5YFZ8"/>
<dbReference type="FunCoup" id="B5YFZ8">
    <property type="interactions" value="48"/>
</dbReference>
<dbReference type="STRING" id="289376.THEYE_A1395"/>
<dbReference type="EnsemblBacteria" id="ACI20348">
    <property type="protein sequence ID" value="ACI20348"/>
    <property type="gene ID" value="THEYE_A1395"/>
</dbReference>
<dbReference type="KEGG" id="tye:THEYE_A1395"/>
<dbReference type="PATRIC" id="fig|289376.4.peg.1357"/>
<dbReference type="eggNOG" id="COG4974">
    <property type="taxonomic scope" value="Bacteria"/>
</dbReference>
<dbReference type="HOGENOM" id="CLU_027562_9_6_0"/>
<dbReference type="InParanoid" id="B5YFZ8"/>
<dbReference type="OrthoDB" id="9801717at2"/>
<dbReference type="Proteomes" id="UP000000718">
    <property type="component" value="Chromosome"/>
</dbReference>
<dbReference type="GO" id="GO:0005737">
    <property type="term" value="C:cytoplasm"/>
    <property type="evidence" value="ECO:0007669"/>
    <property type="project" value="UniProtKB-SubCell"/>
</dbReference>
<dbReference type="GO" id="GO:0003677">
    <property type="term" value="F:DNA binding"/>
    <property type="evidence" value="ECO:0007669"/>
    <property type="project" value="UniProtKB-KW"/>
</dbReference>
<dbReference type="GO" id="GO:0009009">
    <property type="term" value="F:site-specific recombinase activity"/>
    <property type="evidence" value="ECO:0000318"/>
    <property type="project" value="GO_Central"/>
</dbReference>
<dbReference type="GO" id="GO:0009037">
    <property type="term" value="F:tyrosine-based site-specific recombinase activity"/>
    <property type="evidence" value="ECO:0007669"/>
    <property type="project" value="UniProtKB-UniRule"/>
</dbReference>
<dbReference type="GO" id="GO:0051301">
    <property type="term" value="P:cell division"/>
    <property type="evidence" value="ECO:0007669"/>
    <property type="project" value="UniProtKB-KW"/>
</dbReference>
<dbReference type="GO" id="GO:0007059">
    <property type="term" value="P:chromosome segregation"/>
    <property type="evidence" value="ECO:0000318"/>
    <property type="project" value="GO_Central"/>
</dbReference>
<dbReference type="GO" id="GO:0006310">
    <property type="term" value="P:DNA recombination"/>
    <property type="evidence" value="ECO:0000318"/>
    <property type="project" value="GO_Central"/>
</dbReference>
<dbReference type="GO" id="GO:0006313">
    <property type="term" value="P:DNA transposition"/>
    <property type="evidence" value="ECO:0007669"/>
    <property type="project" value="UniProtKB-UniRule"/>
</dbReference>
<dbReference type="CDD" id="cd00798">
    <property type="entry name" value="INT_XerDC_C"/>
    <property type="match status" value="1"/>
</dbReference>
<dbReference type="Gene3D" id="1.10.150.130">
    <property type="match status" value="1"/>
</dbReference>
<dbReference type="Gene3D" id="1.10.443.10">
    <property type="entry name" value="Intergrase catalytic core"/>
    <property type="match status" value="1"/>
</dbReference>
<dbReference type="HAMAP" id="MF_01808">
    <property type="entry name" value="Recomb_XerC_XerD"/>
    <property type="match status" value="1"/>
</dbReference>
<dbReference type="InterPro" id="IPR044068">
    <property type="entry name" value="CB"/>
</dbReference>
<dbReference type="InterPro" id="IPR011010">
    <property type="entry name" value="DNA_brk_join_enz"/>
</dbReference>
<dbReference type="InterPro" id="IPR013762">
    <property type="entry name" value="Integrase-like_cat_sf"/>
</dbReference>
<dbReference type="InterPro" id="IPR002104">
    <property type="entry name" value="Integrase_catalytic"/>
</dbReference>
<dbReference type="InterPro" id="IPR010998">
    <property type="entry name" value="Integrase_recombinase_N"/>
</dbReference>
<dbReference type="InterPro" id="IPR004107">
    <property type="entry name" value="Integrase_SAM-like_N"/>
</dbReference>
<dbReference type="InterPro" id="IPR011931">
    <property type="entry name" value="Recomb_XerC"/>
</dbReference>
<dbReference type="InterPro" id="IPR023009">
    <property type="entry name" value="Tyrosine_recombinase_XerC/XerD"/>
</dbReference>
<dbReference type="InterPro" id="IPR050090">
    <property type="entry name" value="Tyrosine_recombinase_XerCD"/>
</dbReference>
<dbReference type="NCBIfam" id="NF001399">
    <property type="entry name" value="PRK00283.1"/>
    <property type="match status" value="1"/>
</dbReference>
<dbReference type="NCBIfam" id="NF040815">
    <property type="entry name" value="recomb_XerA_Arch"/>
    <property type="match status" value="1"/>
</dbReference>
<dbReference type="NCBIfam" id="TIGR02224">
    <property type="entry name" value="recomb_XerC"/>
    <property type="match status" value="1"/>
</dbReference>
<dbReference type="PANTHER" id="PTHR30349">
    <property type="entry name" value="PHAGE INTEGRASE-RELATED"/>
    <property type="match status" value="1"/>
</dbReference>
<dbReference type="PANTHER" id="PTHR30349:SF77">
    <property type="entry name" value="TYROSINE RECOMBINASE XERC"/>
    <property type="match status" value="1"/>
</dbReference>
<dbReference type="Pfam" id="PF02899">
    <property type="entry name" value="Phage_int_SAM_1"/>
    <property type="match status" value="1"/>
</dbReference>
<dbReference type="Pfam" id="PF00589">
    <property type="entry name" value="Phage_integrase"/>
    <property type="match status" value="1"/>
</dbReference>
<dbReference type="SUPFAM" id="SSF56349">
    <property type="entry name" value="DNA breaking-rejoining enzymes"/>
    <property type="match status" value="1"/>
</dbReference>
<dbReference type="PROSITE" id="PS51900">
    <property type="entry name" value="CB"/>
    <property type="match status" value="1"/>
</dbReference>
<dbReference type="PROSITE" id="PS51898">
    <property type="entry name" value="TYR_RECOMBINASE"/>
    <property type="match status" value="1"/>
</dbReference>
<sequence>MTNTQFYITNFLNHIKLQKGDSSHTLRAYKNDLEEFFNFAKVEPEKVEPIVIRGFISEQILKGKSKTTVARKLSTLRSFFSYLYSEGFIKINPARVVSSVKIKRALPKFLTVDDAFKLVEAPSEDKFTVQRDKAILELFYSSGIRVSELCGLNLEDLDLKEGLIKVRGKGKKERIVPVGQKAKEALKKYLAIRQILRIKKKLSLDETPLFINNRGQRISDRQVRRIVEKYAKFIGVLEKIGPHTLRHTFASHLLMEGADLRVIQELLGHASLSTTQIYTHVDLKHLIEVYDKSHPLSKEDE</sequence>
<name>XERC_THEYD</name>
<organism>
    <name type="scientific">Thermodesulfovibrio yellowstonii (strain ATCC 51303 / DSM 11347 / YP87)</name>
    <dbReference type="NCBI Taxonomy" id="289376"/>
    <lineage>
        <taxon>Bacteria</taxon>
        <taxon>Pseudomonadati</taxon>
        <taxon>Nitrospirota</taxon>
        <taxon>Thermodesulfovibrionia</taxon>
        <taxon>Thermodesulfovibrionales</taxon>
        <taxon>Thermodesulfovibrionaceae</taxon>
        <taxon>Thermodesulfovibrio</taxon>
    </lineage>
</organism>
<feature type="chain" id="PRO_1000187617" description="Tyrosine recombinase XerC">
    <location>
        <begin position="1"/>
        <end position="301"/>
    </location>
</feature>
<feature type="domain" description="Core-binding (CB)" evidence="3">
    <location>
        <begin position="2"/>
        <end position="84"/>
    </location>
</feature>
<feature type="domain" description="Tyr recombinase" evidence="2">
    <location>
        <begin position="105"/>
        <end position="291"/>
    </location>
</feature>
<feature type="active site" evidence="1">
    <location>
        <position position="145"/>
    </location>
</feature>
<feature type="active site" evidence="1">
    <location>
        <position position="169"/>
    </location>
</feature>
<feature type="active site" evidence="1">
    <location>
        <position position="243"/>
    </location>
</feature>
<feature type="active site" evidence="1">
    <location>
        <position position="246"/>
    </location>
</feature>
<feature type="active site" evidence="1">
    <location>
        <position position="269"/>
    </location>
</feature>
<feature type="active site" description="O-(3'-phospho-DNA)-tyrosine intermediate" evidence="1">
    <location>
        <position position="278"/>
    </location>
</feature>
<proteinExistence type="inferred from homology"/>
<accession>B5YFZ8</accession>